<sequence>MARVTVEDCIDKVDNRFELVLLAGHRARQISQGAQITVDRDNDKNPVVALREIAEETLSPADLKEDLIHSLQKHVEVDEPEMASEFISHSSEAGGVLGTSSEEEGSSFDHMSEEELLAGIEGLVVPEKSDDY</sequence>
<evidence type="ECO:0000255" key="1">
    <source>
        <dbReference type="HAMAP-Rule" id="MF_00366"/>
    </source>
</evidence>
<evidence type="ECO:0000256" key="2">
    <source>
        <dbReference type="SAM" id="MobiDB-lite"/>
    </source>
</evidence>
<name>RPOZ_BARHE</name>
<accession>Q6G465</accession>
<reference key="1">
    <citation type="journal article" date="2004" name="Proc. Natl. Acad. Sci. U.S.A.">
        <title>The louse-borne human pathogen Bartonella quintana is a genomic derivative of the zoonotic agent Bartonella henselae.</title>
        <authorList>
            <person name="Alsmark U.C.M."/>
            <person name="Frank A.C."/>
            <person name="Karlberg E.O."/>
            <person name="Legault B.-A."/>
            <person name="Ardell D.H."/>
            <person name="Canbaeck B."/>
            <person name="Eriksson A.-S."/>
            <person name="Naeslund A.K."/>
            <person name="Handley S.A."/>
            <person name="Huvet M."/>
            <person name="La Scola B."/>
            <person name="Holmberg M."/>
            <person name="Andersson S.G.E."/>
        </authorList>
    </citation>
    <scope>NUCLEOTIDE SEQUENCE [LARGE SCALE GENOMIC DNA]</scope>
    <source>
        <strain>ATCC 49882 / DSM 28221 / CCUG 30454 / Houston 1</strain>
    </source>
</reference>
<dbReference type="EC" id="2.7.7.6" evidence="1"/>
<dbReference type="EMBL" id="BX897699">
    <property type="protein sequence ID" value="CAF27311.1"/>
    <property type="molecule type" value="Genomic_DNA"/>
</dbReference>
<dbReference type="RefSeq" id="WP_011180434.1">
    <property type="nucleotide sequence ID" value="NZ_LRIJ02000001.1"/>
</dbReference>
<dbReference type="SMR" id="Q6G465"/>
<dbReference type="PaxDb" id="283166-BH05030"/>
<dbReference type="EnsemblBacteria" id="CAF27311">
    <property type="protein sequence ID" value="CAF27311"/>
    <property type="gene ID" value="BH05030"/>
</dbReference>
<dbReference type="GeneID" id="92985160"/>
<dbReference type="KEGG" id="bhe:BH05030"/>
<dbReference type="eggNOG" id="COG1758">
    <property type="taxonomic scope" value="Bacteria"/>
</dbReference>
<dbReference type="OrthoDB" id="9796300at2"/>
<dbReference type="Proteomes" id="UP000000421">
    <property type="component" value="Chromosome"/>
</dbReference>
<dbReference type="GO" id="GO:0000428">
    <property type="term" value="C:DNA-directed RNA polymerase complex"/>
    <property type="evidence" value="ECO:0007669"/>
    <property type="project" value="UniProtKB-KW"/>
</dbReference>
<dbReference type="GO" id="GO:0003677">
    <property type="term" value="F:DNA binding"/>
    <property type="evidence" value="ECO:0007669"/>
    <property type="project" value="UniProtKB-UniRule"/>
</dbReference>
<dbReference type="GO" id="GO:0003899">
    <property type="term" value="F:DNA-directed RNA polymerase activity"/>
    <property type="evidence" value="ECO:0007669"/>
    <property type="project" value="UniProtKB-UniRule"/>
</dbReference>
<dbReference type="GO" id="GO:0006351">
    <property type="term" value="P:DNA-templated transcription"/>
    <property type="evidence" value="ECO:0007669"/>
    <property type="project" value="UniProtKB-UniRule"/>
</dbReference>
<dbReference type="Gene3D" id="3.90.940.10">
    <property type="match status" value="1"/>
</dbReference>
<dbReference type="HAMAP" id="MF_00366">
    <property type="entry name" value="RNApol_bact_RpoZ"/>
    <property type="match status" value="1"/>
</dbReference>
<dbReference type="InterPro" id="IPR003716">
    <property type="entry name" value="DNA-dir_RNA_pol_omega"/>
</dbReference>
<dbReference type="InterPro" id="IPR006110">
    <property type="entry name" value="Pol_omega/Rpo6/RPB6"/>
</dbReference>
<dbReference type="InterPro" id="IPR036161">
    <property type="entry name" value="RPB6/omega-like_sf"/>
</dbReference>
<dbReference type="NCBIfam" id="TIGR00690">
    <property type="entry name" value="rpoZ"/>
    <property type="match status" value="1"/>
</dbReference>
<dbReference type="PANTHER" id="PTHR34476">
    <property type="entry name" value="DNA-DIRECTED RNA POLYMERASE SUBUNIT OMEGA"/>
    <property type="match status" value="1"/>
</dbReference>
<dbReference type="PANTHER" id="PTHR34476:SF1">
    <property type="entry name" value="DNA-DIRECTED RNA POLYMERASE SUBUNIT OMEGA"/>
    <property type="match status" value="1"/>
</dbReference>
<dbReference type="Pfam" id="PF01192">
    <property type="entry name" value="RNA_pol_Rpb6"/>
    <property type="match status" value="1"/>
</dbReference>
<dbReference type="SMART" id="SM01409">
    <property type="entry name" value="RNA_pol_Rpb6"/>
    <property type="match status" value="1"/>
</dbReference>
<dbReference type="SUPFAM" id="SSF63562">
    <property type="entry name" value="RPB6/omega subunit-like"/>
    <property type="match status" value="1"/>
</dbReference>
<keyword id="KW-0240">DNA-directed RNA polymerase</keyword>
<keyword id="KW-0548">Nucleotidyltransferase</keyword>
<keyword id="KW-0804">Transcription</keyword>
<keyword id="KW-0808">Transferase</keyword>
<comment type="function">
    <text evidence="1">Promotes RNA polymerase assembly. Latches the N- and C-terminal regions of the beta' subunit thereby facilitating its interaction with the beta and alpha subunits.</text>
</comment>
<comment type="catalytic activity">
    <reaction evidence="1">
        <text>RNA(n) + a ribonucleoside 5'-triphosphate = RNA(n+1) + diphosphate</text>
        <dbReference type="Rhea" id="RHEA:21248"/>
        <dbReference type="Rhea" id="RHEA-COMP:14527"/>
        <dbReference type="Rhea" id="RHEA-COMP:17342"/>
        <dbReference type="ChEBI" id="CHEBI:33019"/>
        <dbReference type="ChEBI" id="CHEBI:61557"/>
        <dbReference type="ChEBI" id="CHEBI:140395"/>
        <dbReference type="EC" id="2.7.7.6"/>
    </reaction>
</comment>
<comment type="subunit">
    <text evidence="1">The RNAP catalytic core consists of 2 alpha, 1 beta, 1 beta' and 1 omega subunit. When a sigma factor is associated with the core the holoenzyme is formed, which can initiate transcription.</text>
</comment>
<comment type="similarity">
    <text evidence="1">Belongs to the RNA polymerase subunit omega family.</text>
</comment>
<protein>
    <recommendedName>
        <fullName evidence="1">DNA-directed RNA polymerase subunit omega</fullName>
        <shortName evidence="1">RNAP omega subunit</shortName>
        <ecNumber evidence="1">2.7.7.6</ecNumber>
    </recommendedName>
    <alternativeName>
        <fullName evidence="1">RNA polymerase omega subunit</fullName>
    </alternativeName>
    <alternativeName>
        <fullName evidence="1">Transcriptase subunit omega</fullName>
    </alternativeName>
</protein>
<organism>
    <name type="scientific">Bartonella henselae (strain ATCC 49882 / DSM 28221 / CCUG 30454 / Houston 1)</name>
    <name type="common">Rochalimaea henselae</name>
    <dbReference type="NCBI Taxonomy" id="283166"/>
    <lineage>
        <taxon>Bacteria</taxon>
        <taxon>Pseudomonadati</taxon>
        <taxon>Pseudomonadota</taxon>
        <taxon>Alphaproteobacteria</taxon>
        <taxon>Hyphomicrobiales</taxon>
        <taxon>Bartonellaceae</taxon>
        <taxon>Bartonella</taxon>
    </lineage>
</organism>
<gene>
    <name evidence="1" type="primary">rpoZ</name>
    <name type="ordered locus">BH05030</name>
</gene>
<proteinExistence type="inferred from homology"/>
<feature type="chain" id="PRO_0000237435" description="DNA-directed RNA polymerase subunit omega">
    <location>
        <begin position="1"/>
        <end position="132"/>
    </location>
</feature>
<feature type="region of interest" description="Disordered" evidence="2">
    <location>
        <begin position="90"/>
        <end position="109"/>
    </location>
</feature>